<name>Y0753_DICDI</name>
<dbReference type="EMBL" id="AAFI02000170">
    <property type="protein sequence ID" value="EAL62061.1"/>
    <property type="molecule type" value="Genomic_DNA"/>
</dbReference>
<dbReference type="RefSeq" id="XP_635565.1">
    <property type="nucleotide sequence ID" value="XM_630473.1"/>
</dbReference>
<dbReference type="SMR" id="Q54FM6"/>
<dbReference type="FunCoup" id="Q54FM6">
    <property type="interactions" value="1"/>
</dbReference>
<dbReference type="STRING" id="44689.Q54FM6"/>
<dbReference type="PaxDb" id="44689-DDB0232096"/>
<dbReference type="EnsemblProtists" id="EAL62061">
    <property type="protein sequence ID" value="EAL62061"/>
    <property type="gene ID" value="DDB_G0290753"/>
</dbReference>
<dbReference type="GeneID" id="8627811"/>
<dbReference type="KEGG" id="ddi:DDB_G0290753"/>
<dbReference type="dictyBase" id="DDB_G0290753"/>
<dbReference type="VEuPathDB" id="AmoebaDB:DDB_G0290753"/>
<dbReference type="eggNOG" id="KOG1012">
    <property type="taxonomic scope" value="Eukaryota"/>
</dbReference>
<dbReference type="HOGENOM" id="CLU_129573_0_0_1"/>
<dbReference type="InParanoid" id="Q54FM6"/>
<dbReference type="OMA" id="QITIMSA"/>
<dbReference type="PhylomeDB" id="Q54FM6"/>
<dbReference type="PRO" id="PR:Q54FM6"/>
<dbReference type="Proteomes" id="UP000002195">
    <property type="component" value="Chromosome 5"/>
</dbReference>
<dbReference type="GO" id="GO:0046872">
    <property type="term" value="F:metal ion binding"/>
    <property type="evidence" value="ECO:0007669"/>
    <property type="project" value="UniProtKB-KW"/>
</dbReference>
<dbReference type="Gene3D" id="2.60.40.150">
    <property type="entry name" value="C2 domain"/>
    <property type="match status" value="1"/>
</dbReference>
<dbReference type="InterPro" id="IPR000008">
    <property type="entry name" value="C2_dom"/>
</dbReference>
<dbReference type="InterPro" id="IPR035892">
    <property type="entry name" value="C2_domain_sf"/>
</dbReference>
<dbReference type="PANTHER" id="PTHR45911">
    <property type="entry name" value="C2 DOMAIN-CONTAINING PROTEIN"/>
    <property type="match status" value="1"/>
</dbReference>
<dbReference type="PANTHER" id="PTHR45911:SF4">
    <property type="entry name" value="MULTIPLE C2 AND TRANSMEMBRANE DOMAIN-CONTAINING PROTEIN"/>
    <property type="match status" value="1"/>
</dbReference>
<dbReference type="Pfam" id="PF00168">
    <property type="entry name" value="C2"/>
    <property type="match status" value="1"/>
</dbReference>
<dbReference type="PRINTS" id="PR00360">
    <property type="entry name" value="C2DOMAIN"/>
</dbReference>
<dbReference type="SMART" id="SM00239">
    <property type="entry name" value="C2"/>
    <property type="match status" value="1"/>
</dbReference>
<dbReference type="SUPFAM" id="SSF49562">
    <property type="entry name" value="C2 domain (Calcium/lipid-binding domain, CaLB)"/>
    <property type="match status" value="1"/>
</dbReference>
<dbReference type="PROSITE" id="PS50004">
    <property type="entry name" value="C2"/>
    <property type="match status" value="1"/>
</dbReference>
<sequence>MSGNIYMDIIASQVSQGNFGGKNGQFGYLAKDKSRREKKLTKETKFEAPKKKVEEKFECNVFIGSGTAKSTDSNGLSDPFVIIWSVDAEGQPDKSLFKSKVCKKTLTPNWDEKGTLKLKESYKSLIVELWDHDLLTANDFIGRARINVDAINIKKYSYTFKDTISVYDGEISTPSGTVYIEITNSSSTKSFSSCA</sequence>
<gene>
    <name type="ORF">DDB_G0290753</name>
</gene>
<keyword id="KW-0106">Calcium</keyword>
<keyword id="KW-0479">Metal-binding</keyword>
<keyword id="KW-1185">Reference proteome</keyword>
<proteinExistence type="predicted"/>
<protein>
    <recommendedName>
        <fullName>C2 domain-containing protein DDB_G0290753</fullName>
    </recommendedName>
</protein>
<reference key="1">
    <citation type="journal article" date="2005" name="Nature">
        <title>The genome of the social amoeba Dictyostelium discoideum.</title>
        <authorList>
            <person name="Eichinger L."/>
            <person name="Pachebat J.A."/>
            <person name="Gloeckner G."/>
            <person name="Rajandream M.A."/>
            <person name="Sucgang R."/>
            <person name="Berriman M."/>
            <person name="Song J."/>
            <person name="Olsen R."/>
            <person name="Szafranski K."/>
            <person name="Xu Q."/>
            <person name="Tunggal B."/>
            <person name="Kummerfeld S."/>
            <person name="Madera M."/>
            <person name="Konfortov B.A."/>
            <person name="Rivero F."/>
            <person name="Bankier A.T."/>
            <person name="Lehmann R."/>
            <person name="Hamlin N."/>
            <person name="Davies R."/>
            <person name="Gaudet P."/>
            <person name="Fey P."/>
            <person name="Pilcher K."/>
            <person name="Chen G."/>
            <person name="Saunders D."/>
            <person name="Sodergren E.J."/>
            <person name="Davis P."/>
            <person name="Kerhornou A."/>
            <person name="Nie X."/>
            <person name="Hall N."/>
            <person name="Anjard C."/>
            <person name="Hemphill L."/>
            <person name="Bason N."/>
            <person name="Farbrother P."/>
            <person name="Desany B."/>
            <person name="Just E."/>
            <person name="Morio T."/>
            <person name="Rost R."/>
            <person name="Churcher C.M."/>
            <person name="Cooper J."/>
            <person name="Haydock S."/>
            <person name="van Driessche N."/>
            <person name="Cronin A."/>
            <person name="Goodhead I."/>
            <person name="Muzny D.M."/>
            <person name="Mourier T."/>
            <person name="Pain A."/>
            <person name="Lu M."/>
            <person name="Harper D."/>
            <person name="Lindsay R."/>
            <person name="Hauser H."/>
            <person name="James K.D."/>
            <person name="Quiles M."/>
            <person name="Madan Babu M."/>
            <person name="Saito T."/>
            <person name="Buchrieser C."/>
            <person name="Wardroper A."/>
            <person name="Felder M."/>
            <person name="Thangavelu M."/>
            <person name="Johnson D."/>
            <person name="Knights A."/>
            <person name="Loulseged H."/>
            <person name="Mungall K.L."/>
            <person name="Oliver K."/>
            <person name="Price C."/>
            <person name="Quail M.A."/>
            <person name="Urushihara H."/>
            <person name="Hernandez J."/>
            <person name="Rabbinowitsch E."/>
            <person name="Steffen D."/>
            <person name="Sanders M."/>
            <person name="Ma J."/>
            <person name="Kohara Y."/>
            <person name="Sharp S."/>
            <person name="Simmonds M.N."/>
            <person name="Spiegler S."/>
            <person name="Tivey A."/>
            <person name="Sugano S."/>
            <person name="White B."/>
            <person name="Walker D."/>
            <person name="Woodward J.R."/>
            <person name="Winckler T."/>
            <person name="Tanaka Y."/>
            <person name="Shaulsky G."/>
            <person name="Schleicher M."/>
            <person name="Weinstock G.M."/>
            <person name="Rosenthal A."/>
            <person name="Cox E.C."/>
            <person name="Chisholm R.L."/>
            <person name="Gibbs R.A."/>
            <person name="Loomis W.F."/>
            <person name="Platzer M."/>
            <person name="Kay R.R."/>
            <person name="Williams J.G."/>
            <person name="Dear P.H."/>
            <person name="Noegel A.A."/>
            <person name="Barrell B.G."/>
            <person name="Kuspa A."/>
        </authorList>
    </citation>
    <scope>NUCLEOTIDE SEQUENCE [LARGE SCALE GENOMIC DNA]</scope>
    <source>
        <strain>AX4</strain>
    </source>
</reference>
<organism>
    <name type="scientific">Dictyostelium discoideum</name>
    <name type="common">Social amoeba</name>
    <dbReference type="NCBI Taxonomy" id="44689"/>
    <lineage>
        <taxon>Eukaryota</taxon>
        <taxon>Amoebozoa</taxon>
        <taxon>Evosea</taxon>
        <taxon>Eumycetozoa</taxon>
        <taxon>Dictyostelia</taxon>
        <taxon>Dictyosteliales</taxon>
        <taxon>Dictyosteliaceae</taxon>
        <taxon>Dictyostelium</taxon>
    </lineage>
</organism>
<feature type="chain" id="PRO_0000388241" description="C2 domain-containing protein DDB_G0290753">
    <location>
        <begin position="1"/>
        <end position="195"/>
    </location>
</feature>
<feature type="domain" description="C2" evidence="1">
    <location>
        <begin position="38"/>
        <end position="161"/>
    </location>
</feature>
<feature type="binding site" evidence="1">
    <location>
        <position position="72"/>
    </location>
    <ligand>
        <name>Ca(2+)</name>
        <dbReference type="ChEBI" id="CHEBI:29108"/>
        <label>1</label>
    </ligand>
</feature>
<feature type="binding site" evidence="1">
    <location>
        <position position="72"/>
    </location>
    <ligand>
        <name>Ca(2+)</name>
        <dbReference type="ChEBI" id="CHEBI:29108"/>
        <label>2</label>
    </ligand>
</feature>
<feature type="binding site" evidence="1">
    <location>
        <position position="78"/>
    </location>
    <ligand>
        <name>Ca(2+)</name>
        <dbReference type="ChEBI" id="CHEBI:29108"/>
        <label>1</label>
    </ligand>
</feature>
<feature type="binding site" evidence="1">
    <location>
        <position position="131"/>
    </location>
    <ligand>
        <name>Ca(2+)</name>
        <dbReference type="ChEBI" id="CHEBI:29108"/>
        <label>1</label>
    </ligand>
</feature>
<feature type="binding site" evidence="1">
    <location>
        <position position="131"/>
    </location>
    <ligand>
        <name>Ca(2+)</name>
        <dbReference type="ChEBI" id="CHEBI:29108"/>
        <label>2</label>
    </ligand>
</feature>
<feature type="binding site" evidence="1">
    <location>
        <position position="133"/>
    </location>
    <ligand>
        <name>Ca(2+)</name>
        <dbReference type="ChEBI" id="CHEBI:29108"/>
        <label>1</label>
    </ligand>
</feature>
<feature type="binding site" evidence="1">
    <location>
        <position position="133"/>
    </location>
    <ligand>
        <name>Ca(2+)</name>
        <dbReference type="ChEBI" id="CHEBI:29108"/>
        <label>2</label>
    </ligand>
</feature>
<feature type="binding site" evidence="1">
    <location>
        <position position="139"/>
    </location>
    <ligand>
        <name>Ca(2+)</name>
        <dbReference type="ChEBI" id="CHEBI:29108"/>
        <label>2</label>
    </ligand>
</feature>
<evidence type="ECO:0000255" key="1">
    <source>
        <dbReference type="PROSITE-ProRule" id="PRU00041"/>
    </source>
</evidence>
<accession>Q54FM6</accession>
<comment type="cofactor">
    <cofactor evidence="1">
        <name>Ca(2+)</name>
        <dbReference type="ChEBI" id="CHEBI:29108"/>
    </cofactor>
</comment>